<comment type="function">
    <text evidence="1">Binds to the 23S rRNA.</text>
</comment>
<comment type="similarity">
    <text evidence="1">Belongs to the bacterial ribosomal protein bL9 family.</text>
</comment>
<evidence type="ECO:0000255" key="1">
    <source>
        <dbReference type="HAMAP-Rule" id="MF_00503"/>
    </source>
</evidence>
<evidence type="ECO:0000305" key="2"/>
<feature type="chain" id="PRO_0000176645" description="Large ribosomal subunit protein bL9">
    <location>
        <begin position="1"/>
        <end position="150"/>
    </location>
</feature>
<sequence>MQVIFLNDVRGKGKRGQIKNVPDGYAQNFLIKKGLAKEATKAAINTLKAEQKSEAARAAEELAEAKQVKTVLEADETVVELKAKAGTDGRLFGSIPSKQIATALADQYQVKLDKRKIELPEPIRVLGYTNVPVKLHPEVTAKIRVHVVEK</sequence>
<gene>
    <name evidence="1" type="primary">rplI</name>
    <name type="ordered locus">lp_0013</name>
</gene>
<dbReference type="EMBL" id="AL935263">
    <property type="protein sequence ID" value="CCC77590.1"/>
    <property type="molecule type" value="Genomic_DNA"/>
</dbReference>
<dbReference type="RefSeq" id="WP_003641637.1">
    <property type="nucleotide sequence ID" value="NC_004567.2"/>
</dbReference>
<dbReference type="RefSeq" id="YP_004888104.1">
    <property type="nucleotide sequence ID" value="NC_004567.2"/>
</dbReference>
<dbReference type="SMR" id="Q890J8"/>
<dbReference type="STRING" id="220668.lp_0013"/>
<dbReference type="EnsemblBacteria" id="CCC77590">
    <property type="protein sequence ID" value="CCC77590"/>
    <property type="gene ID" value="lp_0013"/>
</dbReference>
<dbReference type="GeneID" id="89667776"/>
<dbReference type="KEGG" id="lpl:lp_0013"/>
<dbReference type="PATRIC" id="fig|220668.9.peg.11"/>
<dbReference type="eggNOG" id="COG0359">
    <property type="taxonomic scope" value="Bacteria"/>
</dbReference>
<dbReference type="HOGENOM" id="CLU_078938_3_2_9"/>
<dbReference type="OrthoDB" id="9788336at2"/>
<dbReference type="PhylomeDB" id="Q890J8"/>
<dbReference type="Proteomes" id="UP000000432">
    <property type="component" value="Chromosome"/>
</dbReference>
<dbReference type="GO" id="GO:1990904">
    <property type="term" value="C:ribonucleoprotein complex"/>
    <property type="evidence" value="ECO:0007669"/>
    <property type="project" value="UniProtKB-KW"/>
</dbReference>
<dbReference type="GO" id="GO:0005840">
    <property type="term" value="C:ribosome"/>
    <property type="evidence" value="ECO:0007669"/>
    <property type="project" value="UniProtKB-KW"/>
</dbReference>
<dbReference type="GO" id="GO:0019843">
    <property type="term" value="F:rRNA binding"/>
    <property type="evidence" value="ECO:0007669"/>
    <property type="project" value="UniProtKB-UniRule"/>
</dbReference>
<dbReference type="GO" id="GO:0003735">
    <property type="term" value="F:structural constituent of ribosome"/>
    <property type="evidence" value="ECO:0007669"/>
    <property type="project" value="InterPro"/>
</dbReference>
<dbReference type="GO" id="GO:0006412">
    <property type="term" value="P:translation"/>
    <property type="evidence" value="ECO:0007669"/>
    <property type="project" value="UniProtKB-UniRule"/>
</dbReference>
<dbReference type="FunFam" id="3.10.430.100:FF:000002">
    <property type="entry name" value="50S ribosomal protein L9"/>
    <property type="match status" value="1"/>
</dbReference>
<dbReference type="FunFam" id="3.40.5.10:FF:000002">
    <property type="entry name" value="50S ribosomal protein L9"/>
    <property type="match status" value="1"/>
</dbReference>
<dbReference type="Gene3D" id="3.10.430.100">
    <property type="entry name" value="Ribosomal protein L9, C-terminal domain"/>
    <property type="match status" value="1"/>
</dbReference>
<dbReference type="Gene3D" id="3.40.5.10">
    <property type="entry name" value="Ribosomal protein L9, N-terminal domain"/>
    <property type="match status" value="1"/>
</dbReference>
<dbReference type="HAMAP" id="MF_00503">
    <property type="entry name" value="Ribosomal_bL9"/>
    <property type="match status" value="1"/>
</dbReference>
<dbReference type="InterPro" id="IPR000244">
    <property type="entry name" value="Ribosomal_bL9"/>
</dbReference>
<dbReference type="InterPro" id="IPR009027">
    <property type="entry name" value="Ribosomal_bL9/RNase_H1_N"/>
</dbReference>
<dbReference type="InterPro" id="IPR020594">
    <property type="entry name" value="Ribosomal_bL9_bac/chp"/>
</dbReference>
<dbReference type="InterPro" id="IPR020069">
    <property type="entry name" value="Ribosomal_bL9_C"/>
</dbReference>
<dbReference type="InterPro" id="IPR036791">
    <property type="entry name" value="Ribosomal_bL9_C_sf"/>
</dbReference>
<dbReference type="InterPro" id="IPR020070">
    <property type="entry name" value="Ribosomal_bL9_N"/>
</dbReference>
<dbReference type="InterPro" id="IPR036935">
    <property type="entry name" value="Ribosomal_bL9_N_sf"/>
</dbReference>
<dbReference type="NCBIfam" id="TIGR00158">
    <property type="entry name" value="L9"/>
    <property type="match status" value="1"/>
</dbReference>
<dbReference type="PANTHER" id="PTHR21368">
    <property type="entry name" value="50S RIBOSOMAL PROTEIN L9"/>
    <property type="match status" value="1"/>
</dbReference>
<dbReference type="Pfam" id="PF03948">
    <property type="entry name" value="Ribosomal_L9_C"/>
    <property type="match status" value="1"/>
</dbReference>
<dbReference type="Pfam" id="PF01281">
    <property type="entry name" value="Ribosomal_L9_N"/>
    <property type="match status" value="1"/>
</dbReference>
<dbReference type="SUPFAM" id="SSF55658">
    <property type="entry name" value="L9 N-domain-like"/>
    <property type="match status" value="1"/>
</dbReference>
<dbReference type="SUPFAM" id="SSF55653">
    <property type="entry name" value="Ribosomal protein L9 C-domain"/>
    <property type="match status" value="1"/>
</dbReference>
<dbReference type="PROSITE" id="PS00651">
    <property type="entry name" value="RIBOSOMAL_L9"/>
    <property type="match status" value="1"/>
</dbReference>
<reference key="1">
    <citation type="journal article" date="2003" name="Proc. Natl. Acad. Sci. U.S.A.">
        <title>Complete genome sequence of Lactobacillus plantarum WCFS1.</title>
        <authorList>
            <person name="Kleerebezem M."/>
            <person name="Boekhorst J."/>
            <person name="van Kranenburg R."/>
            <person name="Molenaar D."/>
            <person name="Kuipers O.P."/>
            <person name="Leer R."/>
            <person name="Tarchini R."/>
            <person name="Peters S.A."/>
            <person name="Sandbrink H.M."/>
            <person name="Fiers M.W.E.J."/>
            <person name="Stiekema W."/>
            <person name="Klein Lankhorst R.M."/>
            <person name="Bron P.A."/>
            <person name="Hoffer S.M."/>
            <person name="Nierop Groot M.N."/>
            <person name="Kerkhoven R."/>
            <person name="De Vries M."/>
            <person name="Ursing B."/>
            <person name="De Vos W.M."/>
            <person name="Siezen R.J."/>
        </authorList>
    </citation>
    <scope>NUCLEOTIDE SEQUENCE [LARGE SCALE GENOMIC DNA]</scope>
    <source>
        <strain>ATCC BAA-793 / NCIMB 8826 / WCFS1</strain>
    </source>
</reference>
<reference key="2">
    <citation type="journal article" date="2012" name="J. Bacteriol.">
        <title>Complete resequencing and reannotation of the Lactobacillus plantarum WCFS1 genome.</title>
        <authorList>
            <person name="Siezen R.J."/>
            <person name="Francke C."/>
            <person name="Renckens B."/>
            <person name="Boekhorst J."/>
            <person name="Wels M."/>
            <person name="Kleerebezem M."/>
            <person name="van Hijum S.A."/>
        </authorList>
    </citation>
    <scope>NUCLEOTIDE SEQUENCE [LARGE SCALE GENOMIC DNA]</scope>
    <scope>GENOME REANNOTATION</scope>
    <source>
        <strain>ATCC BAA-793 / NCIMB 8826 / WCFS1</strain>
    </source>
</reference>
<keyword id="KW-1185">Reference proteome</keyword>
<keyword id="KW-0687">Ribonucleoprotein</keyword>
<keyword id="KW-0689">Ribosomal protein</keyword>
<keyword id="KW-0694">RNA-binding</keyword>
<keyword id="KW-0699">rRNA-binding</keyword>
<name>RL9_LACPL</name>
<proteinExistence type="inferred from homology"/>
<accession>Q890J8</accession>
<accession>F9US43</accession>
<protein>
    <recommendedName>
        <fullName evidence="1">Large ribosomal subunit protein bL9</fullName>
    </recommendedName>
    <alternativeName>
        <fullName evidence="2">50S ribosomal protein L9</fullName>
    </alternativeName>
</protein>
<organism>
    <name type="scientific">Lactiplantibacillus plantarum (strain ATCC BAA-793 / NCIMB 8826 / WCFS1)</name>
    <name type="common">Lactobacillus plantarum</name>
    <dbReference type="NCBI Taxonomy" id="220668"/>
    <lineage>
        <taxon>Bacteria</taxon>
        <taxon>Bacillati</taxon>
        <taxon>Bacillota</taxon>
        <taxon>Bacilli</taxon>
        <taxon>Lactobacillales</taxon>
        <taxon>Lactobacillaceae</taxon>
        <taxon>Lactiplantibacillus</taxon>
    </lineage>
</organism>